<dbReference type="EC" id="2.4.99.28" evidence="1"/>
<dbReference type="EMBL" id="CP001052">
    <property type="protein sequence ID" value="ACD17808.1"/>
    <property type="molecule type" value="Genomic_DNA"/>
</dbReference>
<dbReference type="RefSeq" id="WP_012434371.1">
    <property type="nucleotide sequence ID" value="NC_010681.1"/>
</dbReference>
<dbReference type="SMR" id="B2SYS3"/>
<dbReference type="STRING" id="398527.Bphyt_3418"/>
<dbReference type="CAZy" id="GT51">
    <property type="family name" value="Glycosyltransferase Family 51"/>
</dbReference>
<dbReference type="KEGG" id="bpy:Bphyt_3418"/>
<dbReference type="eggNOG" id="COG0744">
    <property type="taxonomic scope" value="Bacteria"/>
</dbReference>
<dbReference type="HOGENOM" id="CLU_006354_1_0_4"/>
<dbReference type="OrthoDB" id="9766909at2"/>
<dbReference type="UniPathway" id="UPA00219"/>
<dbReference type="Proteomes" id="UP000001739">
    <property type="component" value="Chromosome 1"/>
</dbReference>
<dbReference type="GO" id="GO:0009274">
    <property type="term" value="C:peptidoglycan-based cell wall"/>
    <property type="evidence" value="ECO:0007669"/>
    <property type="project" value="InterPro"/>
</dbReference>
<dbReference type="GO" id="GO:0005886">
    <property type="term" value="C:plasma membrane"/>
    <property type="evidence" value="ECO:0007669"/>
    <property type="project" value="UniProtKB-SubCell"/>
</dbReference>
<dbReference type="GO" id="GO:0016763">
    <property type="term" value="F:pentosyltransferase activity"/>
    <property type="evidence" value="ECO:0007669"/>
    <property type="project" value="InterPro"/>
</dbReference>
<dbReference type="GO" id="GO:0008955">
    <property type="term" value="F:peptidoglycan glycosyltransferase activity"/>
    <property type="evidence" value="ECO:0007669"/>
    <property type="project" value="UniProtKB-UniRule"/>
</dbReference>
<dbReference type="GO" id="GO:0071555">
    <property type="term" value="P:cell wall organization"/>
    <property type="evidence" value="ECO:0007669"/>
    <property type="project" value="UniProtKB-KW"/>
</dbReference>
<dbReference type="GO" id="GO:0009252">
    <property type="term" value="P:peptidoglycan biosynthetic process"/>
    <property type="evidence" value="ECO:0007669"/>
    <property type="project" value="UniProtKB-UniRule"/>
</dbReference>
<dbReference type="GO" id="GO:0008360">
    <property type="term" value="P:regulation of cell shape"/>
    <property type="evidence" value="ECO:0007669"/>
    <property type="project" value="UniProtKB-KW"/>
</dbReference>
<dbReference type="Gene3D" id="1.10.3810.10">
    <property type="entry name" value="Biosynthetic peptidoglycan transglycosylase-like"/>
    <property type="match status" value="1"/>
</dbReference>
<dbReference type="HAMAP" id="MF_00766">
    <property type="entry name" value="PGT_MtgA"/>
    <property type="match status" value="1"/>
</dbReference>
<dbReference type="InterPro" id="IPR001264">
    <property type="entry name" value="Glyco_trans_51"/>
</dbReference>
<dbReference type="InterPro" id="IPR023346">
    <property type="entry name" value="Lysozyme-like_dom_sf"/>
</dbReference>
<dbReference type="InterPro" id="IPR036950">
    <property type="entry name" value="PBP_transglycosylase"/>
</dbReference>
<dbReference type="InterPro" id="IPR011812">
    <property type="entry name" value="Pep_trsgly"/>
</dbReference>
<dbReference type="NCBIfam" id="TIGR02070">
    <property type="entry name" value="mono_pep_trsgly"/>
    <property type="match status" value="1"/>
</dbReference>
<dbReference type="PANTHER" id="PTHR30400:SF0">
    <property type="entry name" value="BIOSYNTHETIC PEPTIDOGLYCAN TRANSGLYCOSYLASE"/>
    <property type="match status" value="1"/>
</dbReference>
<dbReference type="PANTHER" id="PTHR30400">
    <property type="entry name" value="MONOFUNCTIONAL BIOSYNTHETIC PEPTIDOGLYCAN TRANSGLYCOSYLASE"/>
    <property type="match status" value="1"/>
</dbReference>
<dbReference type="Pfam" id="PF00912">
    <property type="entry name" value="Transgly"/>
    <property type="match status" value="1"/>
</dbReference>
<dbReference type="SUPFAM" id="SSF53955">
    <property type="entry name" value="Lysozyme-like"/>
    <property type="match status" value="1"/>
</dbReference>
<comment type="function">
    <text evidence="1">Peptidoglycan polymerase that catalyzes glycan chain elongation from lipid-linked precursors.</text>
</comment>
<comment type="catalytic activity">
    <reaction evidence="1">
        <text>[GlcNAc-(1-&gt;4)-Mur2Ac(oyl-L-Ala-gamma-D-Glu-L-Lys-D-Ala-D-Ala)](n)-di-trans,octa-cis-undecaprenyl diphosphate + beta-D-GlcNAc-(1-&gt;4)-Mur2Ac(oyl-L-Ala-gamma-D-Glu-L-Lys-D-Ala-D-Ala)-di-trans,octa-cis-undecaprenyl diphosphate = [GlcNAc-(1-&gt;4)-Mur2Ac(oyl-L-Ala-gamma-D-Glu-L-Lys-D-Ala-D-Ala)](n+1)-di-trans,octa-cis-undecaprenyl diphosphate + di-trans,octa-cis-undecaprenyl diphosphate + H(+)</text>
        <dbReference type="Rhea" id="RHEA:23708"/>
        <dbReference type="Rhea" id="RHEA-COMP:9602"/>
        <dbReference type="Rhea" id="RHEA-COMP:9603"/>
        <dbReference type="ChEBI" id="CHEBI:15378"/>
        <dbReference type="ChEBI" id="CHEBI:58405"/>
        <dbReference type="ChEBI" id="CHEBI:60033"/>
        <dbReference type="ChEBI" id="CHEBI:78435"/>
        <dbReference type="EC" id="2.4.99.28"/>
    </reaction>
</comment>
<comment type="pathway">
    <text evidence="1">Cell wall biogenesis; peptidoglycan biosynthesis.</text>
</comment>
<comment type="subcellular location">
    <subcellularLocation>
        <location evidence="1">Cell inner membrane</location>
        <topology evidence="1">Single-pass membrane protein</topology>
    </subcellularLocation>
</comment>
<comment type="similarity">
    <text evidence="1">Belongs to the glycosyltransferase 51 family.</text>
</comment>
<sequence>MTATRRVSRPGPVRWMVYLGAVVAIAWLATQAFYFGQIAVWNYVNPQSTSFMRSDTWRLSQDRPDLSVQHTWVSYDQISRNLKRAIIASEDANFVNNNGYETDAILQAWERNKAKGKIVRGGSTITQQLARNLFLSREKSYIRKGQELIITWMLETLMDKERIFEIYLNSVEWGNGVYGAEAAAHYYYKTSASKLTAAQSARLAVMLPQPKYFDEHRGSQYLAQRARVIARRMGAAELPD</sequence>
<name>MTGA_PARPJ</name>
<protein>
    <recommendedName>
        <fullName evidence="1">Biosynthetic peptidoglycan transglycosylase</fullName>
        <ecNumber evidence="1">2.4.99.28</ecNumber>
    </recommendedName>
    <alternativeName>
        <fullName evidence="1">Glycan polymerase</fullName>
    </alternativeName>
    <alternativeName>
        <fullName evidence="1">Peptidoglycan glycosyltransferase MtgA</fullName>
        <shortName evidence="1">PGT</shortName>
    </alternativeName>
</protein>
<feature type="chain" id="PRO_1000133589" description="Biosynthetic peptidoglycan transglycosylase">
    <location>
        <begin position="1"/>
        <end position="240"/>
    </location>
</feature>
<feature type="transmembrane region" description="Helical" evidence="1">
    <location>
        <begin position="15"/>
        <end position="35"/>
    </location>
</feature>
<accession>B2SYS3</accession>
<reference key="1">
    <citation type="journal article" date="2011" name="J. Bacteriol.">
        <title>Complete genome sequence of the plant growth-promoting endophyte Burkholderia phytofirmans strain PsJN.</title>
        <authorList>
            <person name="Weilharter A."/>
            <person name="Mitter B."/>
            <person name="Shin M.V."/>
            <person name="Chain P.S."/>
            <person name="Nowak J."/>
            <person name="Sessitsch A."/>
        </authorList>
    </citation>
    <scope>NUCLEOTIDE SEQUENCE [LARGE SCALE GENOMIC DNA]</scope>
    <source>
        <strain>DSM 17436 / LMG 22146 / PsJN</strain>
    </source>
</reference>
<gene>
    <name evidence="1" type="primary">mtgA</name>
    <name type="ordered locus">Bphyt_3418</name>
</gene>
<proteinExistence type="inferred from homology"/>
<keyword id="KW-0997">Cell inner membrane</keyword>
<keyword id="KW-1003">Cell membrane</keyword>
<keyword id="KW-0133">Cell shape</keyword>
<keyword id="KW-0961">Cell wall biogenesis/degradation</keyword>
<keyword id="KW-0328">Glycosyltransferase</keyword>
<keyword id="KW-0472">Membrane</keyword>
<keyword id="KW-0573">Peptidoglycan synthesis</keyword>
<keyword id="KW-0808">Transferase</keyword>
<keyword id="KW-0812">Transmembrane</keyword>
<keyword id="KW-1133">Transmembrane helix</keyword>
<evidence type="ECO:0000255" key="1">
    <source>
        <dbReference type="HAMAP-Rule" id="MF_00766"/>
    </source>
</evidence>
<organism>
    <name type="scientific">Paraburkholderia phytofirmans (strain DSM 17436 / LMG 22146 / PsJN)</name>
    <name type="common">Burkholderia phytofirmans</name>
    <dbReference type="NCBI Taxonomy" id="398527"/>
    <lineage>
        <taxon>Bacteria</taxon>
        <taxon>Pseudomonadati</taxon>
        <taxon>Pseudomonadota</taxon>
        <taxon>Betaproteobacteria</taxon>
        <taxon>Burkholderiales</taxon>
        <taxon>Burkholderiaceae</taxon>
        <taxon>Paraburkholderia</taxon>
    </lineage>
</organism>